<feature type="chain" id="PRO_1000079850" description="Large ribosomal subunit protein bL28">
    <location>
        <begin position="1"/>
        <end position="78"/>
    </location>
</feature>
<accession>B0U0F9</accession>
<sequence>MSKVCIVTGKRPATGNNVSHAQNKTRRRFLPNLHTHRFWVESENKYIKLKVSSKGMRIIDKKGIDTVLSDLRAQGHKI</sequence>
<protein>
    <recommendedName>
        <fullName evidence="1">Large ribosomal subunit protein bL28</fullName>
    </recommendedName>
    <alternativeName>
        <fullName evidence="2">50S ribosomal protein L28</fullName>
    </alternativeName>
</protein>
<dbReference type="EMBL" id="CP000937">
    <property type="protein sequence ID" value="ABZ86710.1"/>
    <property type="molecule type" value="Genomic_DNA"/>
</dbReference>
<dbReference type="SMR" id="B0U0F9"/>
<dbReference type="KEGG" id="fph:Fphi_0492"/>
<dbReference type="eggNOG" id="COG0227">
    <property type="taxonomic scope" value="Bacteria"/>
</dbReference>
<dbReference type="HOGENOM" id="CLU_064548_3_1_6"/>
<dbReference type="GO" id="GO:0022625">
    <property type="term" value="C:cytosolic large ribosomal subunit"/>
    <property type="evidence" value="ECO:0007669"/>
    <property type="project" value="TreeGrafter"/>
</dbReference>
<dbReference type="GO" id="GO:0003735">
    <property type="term" value="F:structural constituent of ribosome"/>
    <property type="evidence" value="ECO:0007669"/>
    <property type="project" value="InterPro"/>
</dbReference>
<dbReference type="GO" id="GO:0006412">
    <property type="term" value="P:translation"/>
    <property type="evidence" value="ECO:0007669"/>
    <property type="project" value="UniProtKB-UniRule"/>
</dbReference>
<dbReference type="FunFam" id="2.30.170.40:FF:000001">
    <property type="entry name" value="50S ribosomal protein L28"/>
    <property type="match status" value="1"/>
</dbReference>
<dbReference type="Gene3D" id="2.30.170.40">
    <property type="entry name" value="Ribosomal protein L28/L24"/>
    <property type="match status" value="1"/>
</dbReference>
<dbReference type="HAMAP" id="MF_00373">
    <property type="entry name" value="Ribosomal_bL28"/>
    <property type="match status" value="1"/>
</dbReference>
<dbReference type="InterPro" id="IPR026569">
    <property type="entry name" value="Ribosomal_bL28"/>
</dbReference>
<dbReference type="InterPro" id="IPR034704">
    <property type="entry name" value="Ribosomal_bL28/bL31-like_sf"/>
</dbReference>
<dbReference type="InterPro" id="IPR001383">
    <property type="entry name" value="Ribosomal_bL28_bact-type"/>
</dbReference>
<dbReference type="InterPro" id="IPR037147">
    <property type="entry name" value="Ribosomal_bL28_sf"/>
</dbReference>
<dbReference type="NCBIfam" id="TIGR00009">
    <property type="entry name" value="L28"/>
    <property type="match status" value="1"/>
</dbReference>
<dbReference type="PANTHER" id="PTHR13528">
    <property type="entry name" value="39S RIBOSOMAL PROTEIN L28, MITOCHONDRIAL"/>
    <property type="match status" value="1"/>
</dbReference>
<dbReference type="PANTHER" id="PTHR13528:SF2">
    <property type="entry name" value="LARGE RIBOSOMAL SUBUNIT PROTEIN BL28M"/>
    <property type="match status" value="1"/>
</dbReference>
<dbReference type="Pfam" id="PF00830">
    <property type="entry name" value="Ribosomal_L28"/>
    <property type="match status" value="1"/>
</dbReference>
<dbReference type="SUPFAM" id="SSF143800">
    <property type="entry name" value="L28p-like"/>
    <property type="match status" value="1"/>
</dbReference>
<organism>
    <name type="scientific">Francisella philomiragia subsp. philomiragia (strain ATCC 25017 / CCUG 19701 / FSC 153 / O#319-036)</name>
    <dbReference type="NCBI Taxonomy" id="484022"/>
    <lineage>
        <taxon>Bacteria</taxon>
        <taxon>Pseudomonadati</taxon>
        <taxon>Pseudomonadota</taxon>
        <taxon>Gammaproteobacteria</taxon>
        <taxon>Thiotrichales</taxon>
        <taxon>Francisellaceae</taxon>
        <taxon>Francisella</taxon>
    </lineage>
</organism>
<keyword id="KW-0687">Ribonucleoprotein</keyword>
<keyword id="KW-0689">Ribosomal protein</keyword>
<comment type="similarity">
    <text evidence="1">Belongs to the bacterial ribosomal protein bL28 family.</text>
</comment>
<gene>
    <name evidence="1" type="primary">rpmB</name>
    <name type="ordered locus">Fphi_0492</name>
</gene>
<evidence type="ECO:0000255" key="1">
    <source>
        <dbReference type="HAMAP-Rule" id="MF_00373"/>
    </source>
</evidence>
<evidence type="ECO:0000305" key="2"/>
<reference key="1">
    <citation type="submission" date="2007-12" db="EMBL/GenBank/DDBJ databases">
        <title>Complete sequence of chromosome of Francisella philomiragia subsp. philomiragia ATCC 25017.</title>
        <authorList>
            <consortium name="US DOE Joint Genome Institute"/>
            <person name="Copeland A."/>
            <person name="Lucas S."/>
            <person name="Lapidus A."/>
            <person name="Barry K."/>
            <person name="Detter J.C."/>
            <person name="Glavina del Rio T."/>
            <person name="Hammon N."/>
            <person name="Israni S."/>
            <person name="Dalin E."/>
            <person name="Tice H."/>
            <person name="Pitluck S."/>
            <person name="Chain P."/>
            <person name="Malfatti S."/>
            <person name="Shin M."/>
            <person name="Vergez L."/>
            <person name="Schmutz J."/>
            <person name="Larimer F."/>
            <person name="Land M."/>
            <person name="Hauser L."/>
            <person name="Richardson P."/>
        </authorList>
    </citation>
    <scope>NUCLEOTIDE SEQUENCE [LARGE SCALE GENOMIC DNA]</scope>
    <source>
        <strain>ATCC 25017 / CCUG 19701 / FSC 153 / O#319-036</strain>
    </source>
</reference>
<name>RL28_FRAP2</name>
<proteinExistence type="inferred from homology"/>